<sequence length="215" mass="24180">MKYQLTALEARVIGCLLEKQVTTPEQYPLSVNGVVTACNQKTNREPVMNLSESEVQEQLDNLVKRHYLRTVSGFGNRVTKYEQRFCNSEFGDLKLSAAEVALITTLLLRGAQTPGELRSRAARMYEFSDMAEVESTLEQLANREDGPFVVRLAREPGKRESRYMHLFSGEVEDQPAVMDMSNAVDGDLQARVEALEIEVAELKQRLDSLLAHLGD</sequence>
<feature type="chain" id="PRO_1000201243" description="UPF0502 protein YceH">
    <location>
        <begin position="1"/>
        <end position="215"/>
    </location>
</feature>
<feature type="modified residue" description="N6-acetyllysine" evidence="1">
    <location>
        <position position="80"/>
    </location>
</feature>
<accession>B7NAU2</accession>
<protein>
    <recommendedName>
        <fullName evidence="1">UPF0502 protein YceH</fullName>
    </recommendedName>
</protein>
<evidence type="ECO:0000255" key="1">
    <source>
        <dbReference type="HAMAP-Rule" id="MF_01584"/>
    </source>
</evidence>
<organism>
    <name type="scientific">Escherichia coli O17:K52:H18 (strain UMN026 / ExPEC)</name>
    <dbReference type="NCBI Taxonomy" id="585056"/>
    <lineage>
        <taxon>Bacteria</taxon>
        <taxon>Pseudomonadati</taxon>
        <taxon>Pseudomonadota</taxon>
        <taxon>Gammaproteobacteria</taxon>
        <taxon>Enterobacterales</taxon>
        <taxon>Enterobacteriaceae</taxon>
        <taxon>Escherichia</taxon>
    </lineage>
</organism>
<reference key="1">
    <citation type="journal article" date="2009" name="PLoS Genet.">
        <title>Organised genome dynamics in the Escherichia coli species results in highly diverse adaptive paths.</title>
        <authorList>
            <person name="Touchon M."/>
            <person name="Hoede C."/>
            <person name="Tenaillon O."/>
            <person name="Barbe V."/>
            <person name="Baeriswyl S."/>
            <person name="Bidet P."/>
            <person name="Bingen E."/>
            <person name="Bonacorsi S."/>
            <person name="Bouchier C."/>
            <person name="Bouvet O."/>
            <person name="Calteau A."/>
            <person name="Chiapello H."/>
            <person name="Clermont O."/>
            <person name="Cruveiller S."/>
            <person name="Danchin A."/>
            <person name="Diard M."/>
            <person name="Dossat C."/>
            <person name="Karoui M.E."/>
            <person name="Frapy E."/>
            <person name="Garry L."/>
            <person name="Ghigo J.M."/>
            <person name="Gilles A.M."/>
            <person name="Johnson J."/>
            <person name="Le Bouguenec C."/>
            <person name="Lescat M."/>
            <person name="Mangenot S."/>
            <person name="Martinez-Jehanne V."/>
            <person name="Matic I."/>
            <person name="Nassif X."/>
            <person name="Oztas S."/>
            <person name="Petit M.A."/>
            <person name="Pichon C."/>
            <person name="Rouy Z."/>
            <person name="Ruf C.S."/>
            <person name="Schneider D."/>
            <person name="Tourret J."/>
            <person name="Vacherie B."/>
            <person name="Vallenet D."/>
            <person name="Medigue C."/>
            <person name="Rocha E.P.C."/>
            <person name="Denamur E."/>
        </authorList>
    </citation>
    <scope>NUCLEOTIDE SEQUENCE [LARGE SCALE GENOMIC DNA]</scope>
    <source>
        <strain>UMN026 / ExPEC</strain>
    </source>
</reference>
<comment type="similarity">
    <text evidence="1">Belongs to the UPF0502 family.</text>
</comment>
<name>YCEH_ECOLU</name>
<dbReference type="EMBL" id="CU928163">
    <property type="protein sequence ID" value="CAR12451.1"/>
    <property type="molecule type" value="Genomic_DNA"/>
</dbReference>
<dbReference type="RefSeq" id="WP_000877109.1">
    <property type="nucleotide sequence ID" value="NC_011751.1"/>
</dbReference>
<dbReference type="RefSeq" id="YP_002411994.1">
    <property type="nucleotide sequence ID" value="NC_011751.1"/>
</dbReference>
<dbReference type="SMR" id="B7NAU2"/>
<dbReference type="STRING" id="585056.ECUMN_1241"/>
<dbReference type="KEGG" id="eum:ECUMN_1241"/>
<dbReference type="PATRIC" id="fig|585056.7.peg.1445"/>
<dbReference type="HOGENOM" id="CLU_057831_2_0_6"/>
<dbReference type="Proteomes" id="UP000007097">
    <property type="component" value="Chromosome"/>
</dbReference>
<dbReference type="FunFam" id="1.10.10.10:FF:000196">
    <property type="entry name" value="UPF0502 protein YceH"/>
    <property type="match status" value="1"/>
</dbReference>
<dbReference type="FunFam" id="1.10.10.10:FF:000241">
    <property type="entry name" value="UPF0502 protein YceH"/>
    <property type="match status" value="1"/>
</dbReference>
<dbReference type="Gene3D" id="1.10.10.10">
    <property type="entry name" value="Winged helix-like DNA-binding domain superfamily/Winged helix DNA-binding domain"/>
    <property type="match status" value="2"/>
</dbReference>
<dbReference type="HAMAP" id="MF_01584">
    <property type="entry name" value="UPF0502"/>
    <property type="match status" value="1"/>
</dbReference>
<dbReference type="InterPro" id="IPR007432">
    <property type="entry name" value="DUF480"/>
</dbReference>
<dbReference type="InterPro" id="IPR036388">
    <property type="entry name" value="WH-like_DNA-bd_sf"/>
</dbReference>
<dbReference type="InterPro" id="IPR036390">
    <property type="entry name" value="WH_DNA-bd_sf"/>
</dbReference>
<dbReference type="NCBIfam" id="NF008413">
    <property type="entry name" value="PRK11239.1"/>
    <property type="match status" value="1"/>
</dbReference>
<dbReference type="PANTHER" id="PTHR38768">
    <property type="entry name" value="UPF0502 PROTEIN YCEH"/>
    <property type="match status" value="1"/>
</dbReference>
<dbReference type="PANTHER" id="PTHR38768:SF1">
    <property type="entry name" value="UPF0502 PROTEIN YCEH"/>
    <property type="match status" value="1"/>
</dbReference>
<dbReference type="Pfam" id="PF04337">
    <property type="entry name" value="DUF480"/>
    <property type="match status" value="1"/>
</dbReference>
<dbReference type="SUPFAM" id="SSF46785">
    <property type="entry name" value="Winged helix' DNA-binding domain"/>
    <property type="match status" value="2"/>
</dbReference>
<keyword id="KW-0007">Acetylation</keyword>
<gene>
    <name evidence="1" type="primary">yceH</name>
    <name type="ordered locus">ECUMN_1241</name>
</gene>
<proteinExistence type="inferred from homology"/>